<reference key="1">
    <citation type="journal article" date="2008" name="PLoS ONE">
        <title>Environmental adaptation: genomic analysis of the piezotolerant and psychrotolerant deep-sea iron reducing bacterium Shewanella piezotolerans WP3.</title>
        <authorList>
            <person name="Wang F."/>
            <person name="Wang J."/>
            <person name="Jian H."/>
            <person name="Zhang B."/>
            <person name="Li S."/>
            <person name="Wang F."/>
            <person name="Zeng X."/>
            <person name="Gao L."/>
            <person name="Bartlett D.H."/>
            <person name="Yu J."/>
            <person name="Hu S."/>
            <person name="Xiao X."/>
        </authorList>
    </citation>
    <scope>NUCLEOTIDE SEQUENCE [LARGE SCALE GENOMIC DNA]</scope>
    <source>
        <strain>WP3 / JCM 13877</strain>
    </source>
</reference>
<accession>B8CM41</accession>
<keyword id="KW-0004">4Fe-4S</keyword>
<keyword id="KW-0028">Amino-acid biosynthesis</keyword>
<keyword id="KW-0100">Branched-chain amino acid biosynthesis</keyword>
<keyword id="KW-0408">Iron</keyword>
<keyword id="KW-0411">Iron-sulfur</keyword>
<keyword id="KW-0432">Leucine biosynthesis</keyword>
<keyword id="KW-0456">Lyase</keyword>
<keyword id="KW-0479">Metal-binding</keyword>
<proteinExistence type="inferred from homology"/>
<evidence type="ECO:0000255" key="1">
    <source>
        <dbReference type="HAMAP-Rule" id="MF_01026"/>
    </source>
</evidence>
<organism>
    <name type="scientific">Shewanella piezotolerans (strain WP3 / JCM 13877)</name>
    <dbReference type="NCBI Taxonomy" id="225849"/>
    <lineage>
        <taxon>Bacteria</taxon>
        <taxon>Pseudomonadati</taxon>
        <taxon>Pseudomonadota</taxon>
        <taxon>Gammaproteobacteria</taxon>
        <taxon>Alteromonadales</taxon>
        <taxon>Shewanellaceae</taxon>
        <taxon>Shewanella</taxon>
    </lineage>
</organism>
<feature type="chain" id="PRO_1000135714" description="3-isopropylmalate dehydratase large subunit">
    <location>
        <begin position="1"/>
        <end position="466"/>
    </location>
</feature>
<feature type="binding site" evidence="1">
    <location>
        <position position="347"/>
    </location>
    <ligand>
        <name>[4Fe-4S] cluster</name>
        <dbReference type="ChEBI" id="CHEBI:49883"/>
    </ligand>
</feature>
<feature type="binding site" evidence="1">
    <location>
        <position position="407"/>
    </location>
    <ligand>
        <name>[4Fe-4S] cluster</name>
        <dbReference type="ChEBI" id="CHEBI:49883"/>
    </ligand>
</feature>
<feature type="binding site" evidence="1">
    <location>
        <position position="410"/>
    </location>
    <ligand>
        <name>[4Fe-4S] cluster</name>
        <dbReference type="ChEBI" id="CHEBI:49883"/>
    </ligand>
</feature>
<sequence length="466" mass="49767">MAKTLYEKVWDAHIVVAAEGEAPIIYVDRHLVHEVTSPQAFSGLEVAGRKMRAPEKTFATMDHNTSTTSASLDALSPMARTQVQTLERNCKEFGVRLYDIHHKNQGIVHVMGPELGITLPGTVIVCGDSHTATHGAFGALAFGIGTSEVEHVMATQTLRQLKAKTMKIEVRGHVAEGITAKDIVLAIIGKIGMDGGTGYVVEFCGEAIEALTMEGRMTVCNMAIEMGAKAGMIAPDATTAEYLKGREFAPKGDNWQQAIAAWAELKSDADATFDATVVLQASDIAPQLTWGTNPGQVVAIDQFVPNPAEETNSTVRSSIEKALEYVDLSAGTLMTNVGINKVFIGSCTNSRIEDLRAAAVHAKGRQVAEGVKAIVVPGSGLVKEQAEAEGLDKIFLEAGFEWRLPGCSMCLAMNDDKLEAGDRCASTSNRNFEGRQGRGSRTHLVSPAMAAAAAVAGHFVDIRKPY</sequence>
<protein>
    <recommendedName>
        <fullName evidence="1">3-isopropylmalate dehydratase large subunit</fullName>
        <ecNumber evidence="1">4.2.1.33</ecNumber>
    </recommendedName>
    <alternativeName>
        <fullName evidence="1">Alpha-IPM isomerase</fullName>
        <shortName evidence="1">IPMI</shortName>
    </alternativeName>
    <alternativeName>
        <fullName evidence="1">Isopropylmalate isomerase</fullName>
    </alternativeName>
</protein>
<name>LEUC_SHEPW</name>
<comment type="function">
    <text evidence="1">Catalyzes the isomerization between 2-isopropylmalate and 3-isopropylmalate, via the formation of 2-isopropylmaleate.</text>
</comment>
<comment type="catalytic activity">
    <reaction evidence="1">
        <text>(2R,3S)-3-isopropylmalate = (2S)-2-isopropylmalate</text>
        <dbReference type="Rhea" id="RHEA:32287"/>
        <dbReference type="ChEBI" id="CHEBI:1178"/>
        <dbReference type="ChEBI" id="CHEBI:35121"/>
        <dbReference type="EC" id="4.2.1.33"/>
    </reaction>
</comment>
<comment type="cofactor">
    <cofactor evidence="1">
        <name>[4Fe-4S] cluster</name>
        <dbReference type="ChEBI" id="CHEBI:49883"/>
    </cofactor>
    <text evidence="1">Binds 1 [4Fe-4S] cluster per subunit.</text>
</comment>
<comment type="pathway">
    <text evidence="1">Amino-acid biosynthesis; L-leucine biosynthesis; L-leucine from 3-methyl-2-oxobutanoate: step 2/4.</text>
</comment>
<comment type="subunit">
    <text evidence="1">Heterodimer of LeuC and LeuD.</text>
</comment>
<comment type="similarity">
    <text evidence="1">Belongs to the aconitase/IPM isomerase family. LeuC type 1 subfamily.</text>
</comment>
<dbReference type="EC" id="4.2.1.33" evidence="1"/>
<dbReference type="EMBL" id="CP000472">
    <property type="protein sequence ID" value="ACJ28965.1"/>
    <property type="molecule type" value="Genomic_DNA"/>
</dbReference>
<dbReference type="RefSeq" id="WP_020912326.1">
    <property type="nucleotide sequence ID" value="NC_011566.1"/>
</dbReference>
<dbReference type="SMR" id="B8CM41"/>
<dbReference type="STRING" id="225849.swp_2215"/>
<dbReference type="KEGG" id="swp:swp_2215"/>
<dbReference type="eggNOG" id="COG0065">
    <property type="taxonomic scope" value="Bacteria"/>
</dbReference>
<dbReference type="HOGENOM" id="CLU_006714_3_4_6"/>
<dbReference type="OrthoDB" id="9802769at2"/>
<dbReference type="UniPathway" id="UPA00048">
    <property type="reaction ID" value="UER00071"/>
</dbReference>
<dbReference type="Proteomes" id="UP000000753">
    <property type="component" value="Chromosome"/>
</dbReference>
<dbReference type="GO" id="GO:0003861">
    <property type="term" value="F:3-isopropylmalate dehydratase activity"/>
    <property type="evidence" value="ECO:0007669"/>
    <property type="project" value="UniProtKB-UniRule"/>
</dbReference>
<dbReference type="GO" id="GO:0051539">
    <property type="term" value="F:4 iron, 4 sulfur cluster binding"/>
    <property type="evidence" value="ECO:0007669"/>
    <property type="project" value="UniProtKB-KW"/>
</dbReference>
<dbReference type="GO" id="GO:0046872">
    <property type="term" value="F:metal ion binding"/>
    <property type="evidence" value="ECO:0007669"/>
    <property type="project" value="UniProtKB-KW"/>
</dbReference>
<dbReference type="GO" id="GO:0009098">
    <property type="term" value="P:L-leucine biosynthetic process"/>
    <property type="evidence" value="ECO:0007669"/>
    <property type="project" value="UniProtKB-UniRule"/>
</dbReference>
<dbReference type="CDD" id="cd01583">
    <property type="entry name" value="IPMI"/>
    <property type="match status" value="1"/>
</dbReference>
<dbReference type="FunFam" id="3.30.499.10:FF:000006">
    <property type="entry name" value="3-isopropylmalate dehydratase large subunit"/>
    <property type="match status" value="1"/>
</dbReference>
<dbReference type="FunFam" id="3.30.499.10:FF:000007">
    <property type="entry name" value="3-isopropylmalate dehydratase large subunit"/>
    <property type="match status" value="1"/>
</dbReference>
<dbReference type="Gene3D" id="3.30.499.10">
    <property type="entry name" value="Aconitase, domain 3"/>
    <property type="match status" value="2"/>
</dbReference>
<dbReference type="HAMAP" id="MF_01026">
    <property type="entry name" value="LeuC_type1"/>
    <property type="match status" value="1"/>
</dbReference>
<dbReference type="InterPro" id="IPR004430">
    <property type="entry name" value="3-IsopropMal_deHydase_lsu"/>
</dbReference>
<dbReference type="InterPro" id="IPR015931">
    <property type="entry name" value="Acnase/IPM_dHydase_lsu_aba_1/3"/>
</dbReference>
<dbReference type="InterPro" id="IPR001030">
    <property type="entry name" value="Acoase/IPM_deHydtase_lsu_aba"/>
</dbReference>
<dbReference type="InterPro" id="IPR018136">
    <property type="entry name" value="Aconitase_4Fe-4S_BS"/>
</dbReference>
<dbReference type="InterPro" id="IPR036008">
    <property type="entry name" value="Aconitase_4Fe-4S_dom"/>
</dbReference>
<dbReference type="InterPro" id="IPR050067">
    <property type="entry name" value="IPM_dehydratase_rel_enz"/>
</dbReference>
<dbReference type="InterPro" id="IPR033941">
    <property type="entry name" value="IPMI_cat"/>
</dbReference>
<dbReference type="NCBIfam" id="TIGR00170">
    <property type="entry name" value="leuC"/>
    <property type="match status" value="1"/>
</dbReference>
<dbReference type="NCBIfam" id="NF004016">
    <property type="entry name" value="PRK05478.1"/>
    <property type="match status" value="1"/>
</dbReference>
<dbReference type="NCBIfam" id="NF009116">
    <property type="entry name" value="PRK12466.1"/>
    <property type="match status" value="1"/>
</dbReference>
<dbReference type="PANTHER" id="PTHR43822:SF9">
    <property type="entry name" value="3-ISOPROPYLMALATE DEHYDRATASE"/>
    <property type="match status" value="1"/>
</dbReference>
<dbReference type="PANTHER" id="PTHR43822">
    <property type="entry name" value="HOMOACONITASE, MITOCHONDRIAL-RELATED"/>
    <property type="match status" value="1"/>
</dbReference>
<dbReference type="Pfam" id="PF00330">
    <property type="entry name" value="Aconitase"/>
    <property type="match status" value="1"/>
</dbReference>
<dbReference type="PRINTS" id="PR00415">
    <property type="entry name" value="ACONITASE"/>
</dbReference>
<dbReference type="SUPFAM" id="SSF53732">
    <property type="entry name" value="Aconitase iron-sulfur domain"/>
    <property type="match status" value="1"/>
</dbReference>
<dbReference type="PROSITE" id="PS00450">
    <property type="entry name" value="ACONITASE_1"/>
    <property type="match status" value="1"/>
</dbReference>
<dbReference type="PROSITE" id="PS01244">
    <property type="entry name" value="ACONITASE_2"/>
    <property type="match status" value="1"/>
</dbReference>
<gene>
    <name evidence="1" type="primary">leuC</name>
    <name type="ordered locus">swp_2215</name>
</gene>